<accession>A0JPH7</accession>
<reference key="1">
    <citation type="submission" date="2006-11" db="EMBL/GenBank/DDBJ databases">
        <authorList>
            <consortium name="NIH - Xenopus Gene Collection (XGC) project"/>
        </authorList>
    </citation>
    <scope>NUCLEOTIDE SEQUENCE [LARGE SCALE MRNA]</scope>
    <source>
        <tissue>Ovary</tissue>
    </source>
</reference>
<gene>
    <name type="primary">cep41-b</name>
</gene>
<comment type="function">
    <text evidence="1">Required during ciliogenesis for tubulin glutamylation in cilium. Probably acts by participating in the transport of tubulin polyglutamylases between the basal body and the cilium (By similarity).</text>
</comment>
<comment type="subcellular location">
    <subcellularLocation>
        <location evidence="1">Cytoplasm</location>
        <location evidence="1">Cytoskeleton</location>
        <location evidence="1">Microtubule organizing center</location>
        <location evidence="1">Centrosome</location>
    </subcellularLocation>
    <subcellularLocation>
        <location evidence="1">Cell projection</location>
        <location evidence="1">Cilium</location>
    </subcellularLocation>
    <subcellularLocation>
        <location evidence="1">Cytoplasm</location>
        <location evidence="1">Cytoskeleton</location>
        <location evidence="1">Cilium basal body</location>
    </subcellularLocation>
    <text evidence="1">Localizes mainly to the cilium basal body and in primary cilia.</text>
</comment>
<comment type="similarity">
    <text evidence="4">Belongs to the CEP41 family.</text>
</comment>
<organism>
    <name type="scientific">Xenopus laevis</name>
    <name type="common">African clawed frog</name>
    <dbReference type="NCBI Taxonomy" id="8355"/>
    <lineage>
        <taxon>Eukaryota</taxon>
        <taxon>Metazoa</taxon>
        <taxon>Chordata</taxon>
        <taxon>Craniata</taxon>
        <taxon>Vertebrata</taxon>
        <taxon>Euteleostomi</taxon>
        <taxon>Amphibia</taxon>
        <taxon>Batrachia</taxon>
        <taxon>Anura</taxon>
        <taxon>Pipoidea</taxon>
        <taxon>Pipidae</taxon>
        <taxon>Xenopodinae</taxon>
        <taxon>Xenopus</taxon>
        <taxon>Xenopus</taxon>
    </lineage>
</organism>
<protein>
    <recommendedName>
        <fullName>Centrosomal protein of 41 kDa B</fullName>
        <shortName>Cep41-B</shortName>
    </recommendedName>
</protein>
<proteinExistence type="evidence at transcript level"/>
<name>CE41B_XENLA</name>
<dbReference type="EMBL" id="BC127427">
    <property type="protein sequence ID" value="AAI27428.1"/>
    <property type="molecule type" value="mRNA"/>
</dbReference>
<dbReference type="RefSeq" id="NP_001090561.1">
    <property type="nucleotide sequence ID" value="NM_001097092.1"/>
</dbReference>
<dbReference type="BioGRID" id="674077">
    <property type="interactions" value="1"/>
</dbReference>
<dbReference type="IntAct" id="A0JPH7">
    <property type="interactions" value="2"/>
</dbReference>
<dbReference type="DNASU" id="100036799"/>
<dbReference type="GeneID" id="100036799"/>
<dbReference type="KEGG" id="xla:100036799"/>
<dbReference type="AGR" id="Xenbase:XB-GENE-17343004"/>
<dbReference type="CTD" id="100036799"/>
<dbReference type="Xenbase" id="XB-GENE-17343004">
    <property type="gene designation" value="cep41.L"/>
</dbReference>
<dbReference type="OrthoDB" id="70250at2759"/>
<dbReference type="Proteomes" id="UP000186698">
    <property type="component" value="Chromosome 3L"/>
</dbReference>
<dbReference type="Bgee" id="100036799">
    <property type="expression patterns" value="Expressed in internal ear and 12 other cell types or tissues"/>
</dbReference>
<dbReference type="GO" id="GO:0005814">
    <property type="term" value="C:centriole"/>
    <property type="evidence" value="ECO:0000250"/>
    <property type="project" value="UniProtKB"/>
</dbReference>
<dbReference type="GO" id="GO:0005813">
    <property type="term" value="C:centrosome"/>
    <property type="evidence" value="ECO:0007669"/>
    <property type="project" value="UniProtKB-SubCell"/>
</dbReference>
<dbReference type="GO" id="GO:0036064">
    <property type="term" value="C:ciliary basal body"/>
    <property type="evidence" value="ECO:0000250"/>
    <property type="project" value="UniProtKB"/>
</dbReference>
<dbReference type="GO" id="GO:0005929">
    <property type="term" value="C:cilium"/>
    <property type="evidence" value="ECO:0000250"/>
    <property type="project" value="UniProtKB"/>
</dbReference>
<dbReference type="GO" id="GO:0005737">
    <property type="term" value="C:cytoplasm"/>
    <property type="evidence" value="ECO:0007669"/>
    <property type="project" value="UniProtKB-KW"/>
</dbReference>
<dbReference type="GO" id="GO:0060271">
    <property type="term" value="P:cilium assembly"/>
    <property type="evidence" value="ECO:0000250"/>
    <property type="project" value="UniProtKB"/>
</dbReference>
<dbReference type="GO" id="GO:0018095">
    <property type="term" value="P:protein polyglutamylation"/>
    <property type="evidence" value="ECO:0000250"/>
    <property type="project" value="UniProtKB"/>
</dbReference>
<dbReference type="GO" id="GO:0015031">
    <property type="term" value="P:protein transport"/>
    <property type="evidence" value="ECO:0007669"/>
    <property type="project" value="UniProtKB-KW"/>
</dbReference>
<dbReference type="CDD" id="cd00158">
    <property type="entry name" value="RHOD"/>
    <property type="match status" value="1"/>
</dbReference>
<dbReference type="FunFam" id="3.40.250.10:FF:000012">
    <property type="entry name" value="Centrosomal protein of 41 kDa"/>
    <property type="match status" value="1"/>
</dbReference>
<dbReference type="Gene3D" id="3.40.250.10">
    <property type="entry name" value="Rhodanese-like domain"/>
    <property type="match status" value="1"/>
</dbReference>
<dbReference type="InterPro" id="IPR051889">
    <property type="entry name" value="CEP41"/>
</dbReference>
<dbReference type="InterPro" id="IPR001763">
    <property type="entry name" value="Rhodanese-like_dom"/>
</dbReference>
<dbReference type="InterPro" id="IPR036873">
    <property type="entry name" value="Rhodanese-like_dom_sf"/>
</dbReference>
<dbReference type="PANTHER" id="PTHR44390">
    <property type="entry name" value="CENTROSOMAL PROTEIN OF 41 KDA"/>
    <property type="match status" value="1"/>
</dbReference>
<dbReference type="PANTHER" id="PTHR44390:SF1">
    <property type="entry name" value="CENTROSOMAL PROTEIN OF 41 KDA"/>
    <property type="match status" value="1"/>
</dbReference>
<dbReference type="Pfam" id="PF00581">
    <property type="entry name" value="Rhodanese"/>
    <property type="match status" value="1"/>
</dbReference>
<dbReference type="SMART" id="SM00450">
    <property type="entry name" value="RHOD"/>
    <property type="match status" value="1"/>
</dbReference>
<dbReference type="SUPFAM" id="SSF52821">
    <property type="entry name" value="Rhodanese/Cell cycle control phosphatase"/>
    <property type="match status" value="1"/>
</dbReference>
<dbReference type="PROSITE" id="PS50206">
    <property type="entry name" value="RHODANESE_3"/>
    <property type="match status" value="1"/>
</dbReference>
<evidence type="ECO:0000250" key="1"/>
<evidence type="ECO:0000255" key="2">
    <source>
        <dbReference type="PROSITE-ProRule" id="PRU00173"/>
    </source>
</evidence>
<evidence type="ECO:0000256" key="3">
    <source>
        <dbReference type="SAM" id="MobiDB-lite"/>
    </source>
</evidence>
<evidence type="ECO:0000305" key="4"/>
<keyword id="KW-0966">Cell projection</keyword>
<keyword id="KW-1186">Ciliopathy</keyword>
<keyword id="KW-0969">Cilium</keyword>
<keyword id="KW-0970">Cilium biogenesis/degradation</keyword>
<keyword id="KW-0963">Cytoplasm</keyword>
<keyword id="KW-0206">Cytoskeleton</keyword>
<keyword id="KW-0653">Protein transport</keyword>
<keyword id="KW-1185">Reference proteome</keyword>
<keyword id="KW-0813">Transport</keyword>
<feature type="chain" id="PRO_0000416269" description="Centrosomal protein of 41 kDa B">
    <location>
        <begin position="1"/>
        <end position="365"/>
    </location>
</feature>
<feature type="domain" description="Rhodanese" evidence="2">
    <location>
        <begin position="177"/>
        <end position="274"/>
    </location>
</feature>
<feature type="region of interest" description="Disordered" evidence="3">
    <location>
        <begin position="1"/>
        <end position="23"/>
    </location>
</feature>
<feature type="region of interest" description="Disordered" evidence="3">
    <location>
        <begin position="104"/>
        <end position="123"/>
    </location>
</feature>
<feature type="region of interest" description="Disordered" evidence="3">
    <location>
        <begin position="329"/>
        <end position="365"/>
    </location>
</feature>
<feature type="compositionally biased region" description="Basic and acidic residues" evidence="3">
    <location>
        <begin position="1"/>
        <end position="14"/>
    </location>
</feature>
<feature type="compositionally biased region" description="Low complexity" evidence="3">
    <location>
        <begin position="342"/>
        <end position="365"/>
    </location>
</feature>
<sequence length="365" mass="41109">MSAKRSIGDPEILKKRIPQNQKYQHVKTRLDTGNSMTKYMERIEEIKKNYRYKKDELFKRIKVSTFAQLVLQVASVSEERESGEMTADELQRLEDNSSVISDTEFLTDRPNGKGSPVSESKSPVQFIDSERGEEFIQTSRSTLQSVISGVGELDLGNQADKEKQSLPSSSALDKPYEDCPFLLLDVRDRDSYDQCHIVGARNYPTAMLSRTMNPFTSEILEYRNAHGKIIILYDEDERIASQAATTMCERGFENLFMLSGGLKVISQKFPQGLTTGSFPSTCLAPPTQTKSALKRTPRDPIVPAENKWRFSSQDLEIIENHVENMLMSTSTPSRLRLDSRNSKVPSSASSARSLSSTSSHSKPWK</sequence>